<name>RM50_PONAB</name>
<feature type="chain" id="PRO_0000261661" description="Large ribosomal subunit protein mL50">
    <location>
        <begin position="1"/>
        <end position="158"/>
    </location>
</feature>
<dbReference type="EMBL" id="CR857554">
    <property type="protein sequence ID" value="CAH89832.1"/>
    <property type="molecule type" value="mRNA"/>
</dbReference>
<dbReference type="RefSeq" id="NP_001124850.1">
    <property type="nucleotide sequence ID" value="NM_001131378.1"/>
</dbReference>
<dbReference type="SMR" id="Q5REH5"/>
<dbReference type="FunCoup" id="Q5REH5">
    <property type="interactions" value="853"/>
</dbReference>
<dbReference type="STRING" id="9601.ENSPPYP00000021795"/>
<dbReference type="GeneID" id="100171711"/>
<dbReference type="KEGG" id="pon:100171711"/>
<dbReference type="CTD" id="54534"/>
<dbReference type="eggNOG" id="ENOG502S27V">
    <property type="taxonomic scope" value="Eukaryota"/>
</dbReference>
<dbReference type="InParanoid" id="Q5REH5"/>
<dbReference type="OrthoDB" id="9939609at2759"/>
<dbReference type="Proteomes" id="UP000001595">
    <property type="component" value="Unplaced"/>
</dbReference>
<dbReference type="GO" id="GO:0005762">
    <property type="term" value="C:mitochondrial large ribosomal subunit"/>
    <property type="evidence" value="ECO:0000250"/>
    <property type="project" value="UniProtKB"/>
</dbReference>
<dbReference type="InterPro" id="IPR018305">
    <property type="entry name" value="Ribosomal_m50"/>
</dbReference>
<dbReference type="PANTHER" id="PTHR31542">
    <property type="entry name" value="39A RIBOSOMAL PROTEIN L50, MITOCHONDRIAL"/>
    <property type="match status" value="1"/>
</dbReference>
<dbReference type="PANTHER" id="PTHR31542:SF1">
    <property type="entry name" value="LARGE RIBOSOMAL SUBUNIT PROTEIN ML50"/>
    <property type="match status" value="1"/>
</dbReference>
<dbReference type="Pfam" id="PF10501">
    <property type="entry name" value="Ribosomal_L50"/>
    <property type="match status" value="1"/>
</dbReference>
<comment type="subunit">
    <text evidence="1">Component of the mitochondrial ribosome large subunit (39S) which comprises a 16S rRNA and about 50 distinct proteins.</text>
</comment>
<comment type="subcellular location">
    <subcellularLocation>
        <location evidence="1">Mitochondrion</location>
    </subcellularLocation>
</comment>
<comment type="similarity">
    <text evidence="2">Belongs to the mitochondrion-specific ribosomal protein mL50 family.</text>
</comment>
<keyword id="KW-0496">Mitochondrion</keyword>
<keyword id="KW-1185">Reference proteome</keyword>
<keyword id="KW-0687">Ribonucleoprotein</keyword>
<keyword id="KW-0689">Ribosomal protein</keyword>
<gene>
    <name type="primary">MRPL50</name>
</gene>
<accession>Q5REH5</accession>
<proteinExistence type="evidence at transcript level"/>
<sequence length="158" mass="18425">MAARSVSGITRRVFMWTVSGTPRREFWSRFRKEKEPVVVETVEEKKEPILACPPLRSRAYTPPEDLQSRLESYVKEFFGSSLPSNWQDISLEDSRLKFNLLAHLADDLGHVVPNSRLHQMCRVRDVLDFYNVPIQDRSKFDELNASNLPPNLKITWSY</sequence>
<organism>
    <name type="scientific">Pongo abelii</name>
    <name type="common">Sumatran orangutan</name>
    <name type="synonym">Pongo pygmaeus abelii</name>
    <dbReference type="NCBI Taxonomy" id="9601"/>
    <lineage>
        <taxon>Eukaryota</taxon>
        <taxon>Metazoa</taxon>
        <taxon>Chordata</taxon>
        <taxon>Craniata</taxon>
        <taxon>Vertebrata</taxon>
        <taxon>Euteleostomi</taxon>
        <taxon>Mammalia</taxon>
        <taxon>Eutheria</taxon>
        <taxon>Euarchontoglires</taxon>
        <taxon>Primates</taxon>
        <taxon>Haplorrhini</taxon>
        <taxon>Catarrhini</taxon>
        <taxon>Hominidae</taxon>
        <taxon>Pongo</taxon>
    </lineage>
</organism>
<reference key="1">
    <citation type="submission" date="2004-11" db="EMBL/GenBank/DDBJ databases">
        <authorList>
            <consortium name="The German cDNA consortium"/>
        </authorList>
    </citation>
    <scope>NUCLEOTIDE SEQUENCE [LARGE SCALE MRNA]</scope>
    <source>
        <tissue>Heart</tissue>
    </source>
</reference>
<protein>
    <recommendedName>
        <fullName evidence="2">Large ribosomal subunit protein mL50</fullName>
    </recommendedName>
    <alternativeName>
        <fullName>39S ribosomal protein L50, mitochondrial</fullName>
        <shortName>L50mt</shortName>
        <shortName>MRP-L50</shortName>
    </alternativeName>
</protein>
<evidence type="ECO:0000250" key="1">
    <source>
        <dbReference type="UniProtKB" id="Q8N5N7"/>
    </source>
</evidence>
<evidence type="ECO:0000305" key="2"/>